<comment type="function">
    <text evidence="1">This protein is involved in the repair of mismatches in DNA. It is required for dam-dependent methyl-directed DNA mismatch repair. May act as a 'molecular matchmaker', a protein that promotes the formation of a stable complex between two or more DNA-binding proteins in an ATP-dependent manner without itself being part of a final effector complex.</text>
</comment>
<comment type="similarity">
    <text evidence="1">Belongs to the DNA mismatch repair MutL/HexB family.</text>
</comment>
<sequence length="557" mass="61378">MPRIHILDEETVSRIAAGEVIERPASVVKELIENSIDAGASRIIIEVENGGISLIKLVDDGCGIEREDLPLAFQRHATSKISTADDLFRLKTLGFRGEALSAIASVSKCVEVHTRTRYSPVGTYLRLENGRVAEIKDDGCPYGTSIEVRGLFETIPARLKHLSSPSQELARIAEIVTQMAIIHHRISFELSSGRRTLFRSNASETWDDALIRAFGLRTAKGMISIIAEGDGFDLHGMISSHDSSHHGSELILVYVNSRPVYSKVVVQALREAYRGFLQSGRSPLAVISIEIEPSLVDVNVHPAKREVRFLREDEVYDAVRDAALSALRSSAIPSPPPPARIAEPQLWSAKPQIQRTLPLEVQAEQRISEPLIRIVGQALDLYIIVEDDDGIMLVDQHAAAERIRYEHLLEKCKSGSISQELIQPVTVELSPGEVALLDSFSGELGEIGFEIDPFGGRAYSVRSVPAAAGLESPESIRDVLREILNLGRVCRASFRDEALKHLACRGSIKSGERLSESAMLRLLTDLFACDNPRTCPHGRPVVVRISSESLEKMFGRR</sequence>
<dbReference type="EMBL" id="CP000477">
    <property type="protein sequence ID" value="ABK15251.1"/>
    <property type="molecule type" value="Genomic_DNA"/>
</dbReference>
<dbReference type="RefSeq" id="WP_011696643.1">
    <property type="nucleotide sequence ID" value="NC_008553.1"/>
</dbReference>
<dbReference type="SMR" id="A0B977"/>
<dbReference type="STRING" id="349307.Mthe_1478"/>
<dbReference type="GeneID" id="4461932"/>
<dbReference type="KEGG" id="mtp:Mthe_1478"/>
<dbReference type="HOGENOM" id="CLU_004131_4_2_2"/>
<dbReference type="OrthoDB" id="146201at2157"/>
<dbReference type="Proteomes" id="UP000000674">
    <property type="component" value="Chromosome"/>
</dbReference>
<dbReference type="GO" id="GO:0032300">
    <property type="term" value="C:mismatch repair complex"/>
    <property type="evidence" value="ECO:0007669"/>
    <property type="project" value="InterPro"/>
</dbReference>
<dbReference type="GO" id="GO:0005524">
    <property type="term" value="F:ATP binding"/>
    <property type="evidence" value="ECO:0007669"/>
    <property type="project" value="InterPro"/>
</dbReference>
<dbReference type="GO" id="GO:0016887">
    <property type="term" value="F:ATP hydrolysis activity"/>
    <property type="evidence" value="ECO:0007669"/>
    <property type="project" value="InterPro"/>
</dbReference>
<dbReference type="GO" id="GO:0140664">
    <property type="term" value="F:ATP-dependent DNA damage sensor activity"/>
    <property type="evidence" value="ECO:0007669"/>
    <property type="project" value="InterPro"/>
</dbReference>
<dbReference type="GO" id="GO:0030983">
    <property type="term" value="F:mismatched DNA binding"/>
    <property type="evidence" value="ECO:0007669"/>
    <property type="project" value="InterPro"/>
</dbReference>
<dbReference type="GO" id="GO:0006298">
    <property type="term" value="P:mismatch repair"/>
    <property type="evidence" value="ECO:0007669"/>
    <property type="project" value="UniProtKB-UniRule"/>
</dbReference>
<dbReference type="CDD" id="cd16926">
    <property type="entry name" value="HATPase_MutL-MLH-PMS-like"/>
    <property type="match status" value="1"/>
</dbReference>
<dbReference type="CDD" id="cd00782">
    <property type="entry name" value="MutL_Trans"/>
    <property type="match status" value="1"/>
</dbReference>
<dbReference type="FunFam" id="3.30.565.10:FF:000003">
    <property type="entry name" value="DNA mismatch repair endonuclease MutL"/>
    <property type="match status" value="1"/>
</dbReference>
<dbReference type="Gene3D" id="3.30.230.10">
    <property type="match status" value="1"/>
</dbReference>
<dbReference type="Gene3D" id="3.30.565.10">
    <property type="entry name" value="Histidine kinase-like ATPase, C-terminal domain"/>
    <property type="match status" value="1"/>
</dbReference>
<dbReference type="Gene3D" id="3.30.1540.20">
    <property type="entry name" value="MutL, C-terminal domain, dimerisation subdomain"/>
    <property type="match status" value="1"/>
</dbReference>
<dbReference type="Gene3D" id="3.30.1370.100">
    <property type="entry name" value="MutL, C-terminal domain, regulatory subdomain"/>
    <property type="match status" value="1"/>
</dbReference>
<dbReference type="HAMAP" id="MF_00149">
    <property type="entry name" value="DNA_mis_repair"/>
    <property type="match status" value="1"/>
</dbReference>
<dbReference type="InterPro" id="IPR014762">
    <property type="entry name" value="DNA_mismatch_repair_CS"/>
</dbReference>
<dbReference type="InterPro" id="IPR020667">
    <property type="entry name" value="DNA_mismatch_repair_MutL"/>
</dbReference>
<dbReference type="InterPro" id="IPR013507">
    <property type="entry name" value="DNA_mismatch_S5_2-like"/>
</dbReference>
<dbReference type="InterPro" id="IPR036890">
    <property type="entry name" value="HATPase_C_sf"/>
</dbReference>
<dbReference type="InterPro" id="IPR002099">
    <property type="entry name" value="MutL/Mlh/PMS"/>
</dbReference>
<dbReference type="InterPro" id="IPR038973">
    <property type="entry name" value="MutL/Mlh/Pms-like"/>
</dbReference>
<dbReference type="InterPro" id="IPR014790">
    <property type="entry name" value="MutL_C"/>
</dbReference>
<dbReference type="InterPro" id="IPR042120">
    <property type="entry name" value="MutL_C_dimsub"/>
</dbReference>
<dbReference type="InterPro" id="IPR042121">
    <property type="entry name" value="MutL_C_regsub"/>
</dbReference>
<dbReference type="InterPro" id="IPR037198">
    <property type="entry name" value="MutL_C_sf"/>
</dbReference>
<dbReference type="InterPro" id="IPR020568">
    <property type="entry name" value="Ribosomal_Su5_D2-typ_SF"/>
</dbReference>
<dbReference type="InterPro" id="IPR014721">
    <property type="entry name" value="Ribsml_uS5_D2-typ_fold_subgr"/>
</dbReference>
<dbReference type="NCBIfam" id="TIGR00585">
    <property type="entry name" value="mutl"/>
    <property type="match status" value="1"/>
</dbReference>
<dbReference type="PANTHER" id="PTHR10073">
    <property type="entry name" value="DNA MISMATCH REPAIR PROTEIN MLH, PMS, MUTL"/>
    <property type="match status" value="1"/>
</dbReference>
<dbReference type="PANTHER" id="PTHR10073:SF12">
    <property type="entry name" value="DNA MISMATCH REPAIR PROTEIN MLH1"/>
    <property type="match status" value="1"/>
</dbReference>
<dbReference type="Pfam" id="PF01119">
    <property type="entry name" value="DNA_mis_repair"/>
    <property type="match status" value="1"/>
</dbReference>
<dbReference type="Pfam" id="PF13589">
    <property type="entry name" value="HATPase_c_3"/>
    <property type="match status" value="1"/>
</dbReference>
<dbReference type="Pfam" id="PF08676">
    <property type="entry name" value="MutL_C"/>
    <property type="match status" value="1"/>
</dbReference>
<dbReference type="SMART" id="SM01340">
    <property type="entry name" value="DNA_mis_repair"/>
    <property type="match status" value="1"/>
</dbReference>
<dbReference type="SMART" id="SM00853">
    <property type="entry name" value="MutL_C"/>
    <property type="match status" value="1"/>
</dbReference>
<dbReference type="SUPFAM" id="SSF55874">
    <property type="entry name" value="ATPase domain of HSP90 chaperone/DNA topoisomerase II/histidine kinase"/>
    <property type="match status" value="1"/>
</dbReference>
<dbReference type="SUPFAM" id="SSF118116">
    <property type="entry name" value="DNA mismatch repair protein MutL"/>
    <property type="match status" value="1"/>
</dbReference>
<dbReference type="SUPFAM" id="SSF54211">
    <property type="entry name" value="Ribosomal protein S5 domain 2-like"/>
    <property type="match status" value="1"/>
</dbReference>
<dbReference type="PROSITE" id="PS00058">
    <property type="entry name" value="DNA_MISMATCH_REPAIR_1"/>
    <property type="match status" value="1"/>
</dbReference>
<reference key="1">
    <citation type="submission" date="2006-10" db="EMBL/GenBank/DDBJ databases">
        <title>Complete sequence of Methanosaeta thermophila PT.</title>
        <authorList>
            <consortium name="US DOE Joint Genome Institute"/>
            <person name="Copeland A."/>
            <person name="Lucas S."/>
            <person name="Lapidus A."/>
            <person name="Barry K."/>
            <person name="Detter J.C."/>
            <person name="Glavina del Rio T."/>
            <person name="Hammon N."/>
            <person name="Israni S."/>
            <person name="Pitluck S."/>
            <person name="Chain P."/>
            <person name="Malfatti S."/>
            <person name="Shin M."/>
            <person name="Vergez L."/>
            <person name="Schmutz J."/>
            <person name="Larimer F."/>
            <person name="Land M."/>
            <person name="Hauser L."/>
            <person name="Kyrpides N."/>
            <person name="Kim E."/>
            <person name="Smith K.S."/>
            <person name="Ingram-Smith C."/>
            <person name="Richardson P."/>
        </authorList>
    </citation>
    <scope>NUCLEOTIDE SEQUENCE [LARGE SCALE GENOMIC DNA]</scope>
    <source>
        <strain>DSM 6194 / JCM 14653 / NBRC 101360 / PT</strain>
    </source>
</reference>
<proteinExistence type="inferred from homology"/>
<name>MUTL_METTP</name>
<gene>
    <name evidence="1" type="primary">mutL</name>
    <name type="ordered locus">Mthe_1478</name>
</gene>
<accession>A0B977</accession>
<organism>
    <name type="scientific">Methanothrix thermoacetophila (strain DSM 6194 / JCM 14653 / NBRC 101360 / PT)</name>
    <name type="common">Methanosaeta thermophila</name>
    <dbReference type="NCBI Taxonomy" id="349307"/>
    <lineage>
        <taxon>Archaea</taxon>
        <taxon>Methanobacteriati</taxon>
        <taxon>Methanobacteriota</taxon>
        <taxon>Stenosarchaea group</taxon>
        <taxon>Methanomicrobia</taxon>
        <taxon>Methanotrichales</taxon>
        <taxon>Methanotrichaceae</taxon>
        <taxon>Methanothrix</taxon>
    </lineage>
</organism>
<evidence type="ECO:0000255" key="1">
    <source>
        <dbReference type="HAMAP-Rule" id="MF_00149"/>
    </source>
</evidence>
<protein>
    <recommendedName>
        <fullName evidence="1">DNA mismatch repair protein MutL</fullName>
    </recommendedName>
</protein>
<feature type="chain" id="PRO_1000010045" description="DNA mismatch repair protein MutL">
    <location>
        <begin position="1"/>
        <end position="557"/>
    </location>
</feature>
<keyword id="KW-0227">DNA damage</keyword>
<keyword id="KW-0234">DNA repair</keyword>
<keyword id="KW-1185">Reference proteome</keyword>